<proteinExistence type="inferred from homology"/>
<keyword id="KW-0030">Aminoacyl-tRNA synthetase</keyword>
<keyword id="KW-0067">ATP-binding</keyword>
<keyword id="KW-0963">Cytoplasm</keyword>
<keyword id="KW-0436">Ligase</keyword>
<keyword id="KW-0479">Metal-binding</keyword>
<keyword id="KW-0547">Nucleotide-binding</keyword>
<keyword id="KW-0648">Protein biosynthesis</keyword>
<keyword id="KW-1185">Reference proteome</keyword>
<keyword id="KW-0694">RNA-binding</keyword>
<keyword id="KW-0820">tRNA-binding</keyword>
<keyword id="KW-0862">Zinc</keyword>
<feature type="chain" id="PRO_0000075221" description="Alanine--tRNA ligase">
    <location>
        <begin position="1"/>
        <end position="872"/>
    </location>
</feature>
<feature type="binding site" evidence="1">
    <location>
        <position position="567"/>
    </location>
    <ligand>
        <name>Zn(2+)</name>
        <dbReference type="ChEBI" id="CHEBI:29105"/>
    </ligand>
</feature>
<feature type="binding site" evidence="1">
    <location>
        <position position="571"/>
    </location>
    <ligand>
        <name>Zn(2+)</name>
        <dbReference type="ChEBI" id="CHEBI:29105"/>
    </ligand>
</feature>
<feature type="binding site" evidence="1">
    <location>
        <position position="669"/>
    </location>
    <ligand>
        <name>Zn(2+)</name>
        <dbReference type="ChEBI" id="CHEBI:29105"/>
    </ligand>
</feature>
<feature type="binding site" evidence="1">
    <location>
        <position position="673"/>
    </location>
    <ligand>
        <name>Zn(2+)</name>
        <dbReference type="ChEBI" id="CHEBI:29105"/>
    </ligand>
</feature>
<name>SYA_STRT2</name>
<organism>
    <name type="scientific">Streptococcus thermophilus (strain ATCC BAA-250 / LMG 18311)</name>
    <dbReference type="NCBI Taxonomy" id="264199"/>
    <lineage>
        <taxon>Bacteria</taxon>
        <taxon>Bacillati</taxon>
        <taxon>Bacillota</taxon>
        <taxon>Bacilli</taxon>
        <taxon>Lactobacillales</taxon>
        <taxon>Streptococcaceae</taxon>
        <taxon>Streptococcus</taxon>
    </lineage>
</organism>
<dbReference type="EC" id="6.1.1.7" evidence="1"/>
<dbReference type="EMBL" id="CP000023">
    <property type="protein sequence ID" value="AAV60167.1"/>
    <property type="molecule type" value="Genomic_DNA"/>
</dbReference>
<dbReference type="RefSeq" id="WP_011225574.1">
    <property type="nucleotide sequence ID" value="NC_006448.1"/>
</dbReference>
<dbReference type="SMR" id="Q5M5L5"/>
<dbReference type="STRING" id="264199.stu0457"/>
<dbReference type="GeneID" id="66898369"/>
<dbReference type="KEGG" id="stl:stu0457"/>
<dbReference type="PATRIC" id="fig|264199.4.peg.460"/>
<dbReference type="eggNOG" id="COG0013">
    <property type="taxonomic scope" value="Bacteria"/>
</dbReference>
<dbReference type="HOGENOM" id="CLU_004485_1_1_9"/>
<dbReference type="Proteomes" id="UP000001170">
    <property type="component" value="Chromosome"/>
</dbReference>
<dbReference type="GO" id="GO:0005829">
    <property type="term" value="C:cytosol"/>
    <property type="evidence" value="ECO:0007669"/>
    <property type="project" value="TreeGrafter"/>
</dbReference>
<dbReference type="GO" id="GO:0004813">
    <property type="term" value="F:alanine-tRNA ligase activity"/>
    <property type="evidence" value="ECO:0007669"/>
    <property type="project" value="UniProtKB-UniRule"/>
</dbReference>
<dbReference type="GO" id="GO:0002161">
    <property type="term" value="F:aminoacyl-tRNA deacylase activity"/>
    <property type="evidence" value="ECO:0007669"/>
    <property type="project" value="TreeGrafter"/>
</dbReference>
<dbReference type="GO" id="GO:0005524">
    <property type="term" value="F:ATP binding"/>
    <property type="evidence" value="ECO:0007669"/>
    <property type="project" value="UniProtKB-UniRule"/>
</dbReference>
<dbReference type="GO" id="GO:0140096">
    <property type="term" value="F:catalytic activity, acting on a protein"/>
    <property type="evidence" value="ECO:0007669"/>
    <property type="project" value="UniProtKB-ARBA"/>
</dbReference>
<dbReference type="GO" id="GO:0016740">
    <property type="term" value="F:transferase activity"/>
    <property type="evidence" value="ECO:0007669"/>
    <property type="project" value="UniProtKB-ARBA"/>
</dbReference>
<dbReference type="GO" id="GO:0000049">
    <property type="term" value="F:tRNA binding"/>
    <property type="evidence" value="ECO:0007669"/>
    <property type="project" value="UniProtKB-KW"/>
</dbReference>
<dbReference type="GO" id="GO:0008270">
    <property type="term" value="F:zinc ion binding"/>
    <property type="evidence" value="ECO:0007669"/>
    <property type="project" value="UniProtKB-UniRule"/>
</dbReference>
<dbReference type="GO" id="GO:0006419">
    <property type="term" value="P:alanyl-tRNA aminoacylation"/>
    <property type="evidence" value="ECO:0007669"/>
    <property type="project" value="UniProtKB-UniRule"/>
</dbReference>
<dbReference type="CDD" id="cd00673">
    <property type="entry name" value="AlaRS_core"/>
    <property type="match status" value="1"/>
</dbReference>
<dbReference type="FunFam" id="3.10.310.40:FF:000001">
    <property type="entry name" value="Alanine--tRNA ligase"/>
    <property type="match status" value="1"/>
</dbReference>
<dbReference type="FunFam" id="3.30.54.20:FF:000001">
    <property type="entry name" value="Alanine--tRNA ligase"/>
    <property type="match status" value="1"/>
</dbReference>
<dbReference type="FunFam" id="3.30.930.10:FF:000046">
    <property type="entry name" value="Alanine--tRNA ligase"/>
    <property type="match status" value="1"/>
</dbReference>
<dbReference type="FunFam" id="3.30.980.10:FF:000004">
    <property type="entry name" value="Alanine--tRNA ligase, cytoplasmic"/>
    <property type="match status" value="1"/>
</dbReference>
<dbReference type="Gene3D" id="2.40.30.130">
    <property type="match status" value="1"/>
</dbReference>
<dbReference type="Gene3D" id="3.10.310.40">
    <property type="match status" value="1"/>
</dbReference>
<dbReference type="Gene3D" id="3.30.54.20">
    <property type="match status" value="1"/>
</dbReference>
<dbReference type="Gene3D" id="6.10.250.550">
    <property type="match status" value="1"/>
</dbReference>
<dbReference type="Gene3D" id="3.30.930.10">
    <property type="entry name" value="Bira Bifunctional Protein, Domain 2"/>
    <property type="match status" value="1"/>
</dbReference>
<dbReference type="Gene3D" id="3.30.980.10">
    <property type="entry name" value="Threonyl-trna Synthetase, Chain A, domain 2"/>
    <property type="match status" value="1"/>
</dbReference>
<dbReference type="HAMAP" id="MF_00036_B">
    <property type="entry name" value="Ala_tRNA_synth_B"/>
    <property type="match status" value="1"/>
</dbReference>
<dbReference type="InterPro" id="IPR045864">
    <property type="entry name" value="aa-tRNA-synth_II/BPL/LPL"/>
</dbReference>
<dbReference type="InterPro" id="IPR002318">
    <property type="entry name" value="Ala-tRNA-lgiase_IIc"/>
</dbReference>
<dbReference type="InterPro" id="IPR018162">
    <property type="entry name" value="Ala-tRNA-ligase_IIc_anticod-bd"/>
</dbReference>
<dbReference type="InterPro" id="IPR018165">
    <property type="entry name" value="Ala-tRNA-synth_IIc_core"/>
</dbReference>
<dbReference type="InterPro" id="IPR018164">
    <property type="entry name" value="Ala-tRNA-synth_IIc_N"/>
</dbReference>
<dbReference type="InterPro" id="IPR050058">
    <property type="entry name" value="Ala-tRNA_ligase"/>
</dbReference>
<dbReference type="InterPro" id="IPR023033">
    <property type="entry name" value="Ala_tRNA_ligase_euk/bac"/>
</dbReference>
<dbReference type="InterPro" id="IPR003156">
    <property type="entry name" value="DHHA1_dom"/>
</dbReference>
<dbReference type="InterPro" id="IPR018163">
    <property type="entry name" value="Thr/Ala-tRNA-synth_IIc_edit"/>
</dbReference>
<dbReference type="InterPro" id="IPR009000">
    <property type="entry name" value="Transl_B-barrel_sf"/>
</dbReference>
<dbReference type="InterPro" id="IPR012947">
    <property type="entry name" value="tRNA_SAD"/>
</dbReference>
<dbReference type="NCBIfam" id="TIGR00344">
    <property type="entry name" value="alaS"/>
    <property type="match status" value="1"/>
</dbReference>
<dbReference type="PANTHER" id="PTHR11777:SF9">
    <property type="entry name" value="ALANINE--TRNA LIGASE, CYTOPLASMIC"/>
    <property type="match status" value="1"/>
</dbReference>
<dbReference type="PANTHER" id="PTHR11777">
    <property type="entry name" value="ALANYL-TRNA SYNTHETASE"/>
    <property type="match status" value="1"/>
</dbReference>
<dbReference type="Pfam" id="PF02272">
    <property type="entry name" value="DHHA1"/>
    <property type="match status" value="1"/>
</dbReference>
<dbReference type="Pfam" id="PF01411">
    <property type="entry name" value="tRNA-synt_2c"/>
    <property type="match status" value="1"/>
</dbReference>
<dbReference type="Pfam" id="PF07973">
    <property type="entry name" value="tRNA_SAD"/>
    <property type="match status" value="1"/>
</dbReference>
<dbReference type="PRINTS" id="PR00980">
    <property type="entry name" value="TRNASYNTHALA"/>
</dbReference>
<dbReference type="SMART" id="SM00863">
    <property type="entry name" value="tRNA_SAD"/>
    <property type="match status" value="1"/>
</dbReference>
<dbReference type="SUPFAM" id="SSF55681">
    <property type="entry name" value="Class II aaRS and biotin synthetases"/>
    <property type="match status" value="1"/>
</dbReference>
<dbReference type="SUPFAM" id="SSF101353">
    <property type="entry name" value="Putative anticodon-binding domain of alanyl-tRNA synthetase (AlaRS)"/>
    <property type="match status" value="1"/>
</dbReference>
<dbReference type="SUPFAM" id="SSF55186">
    <property type="entry name" value="ThrRS/AlaRS common domain"/>
    <property type="match status" value="1"/>
</dbReference>
<dbReference type="SUPFAM" id="SSF50447">
    <property type="entry name" value="Translation proteins"/>
    <property type="match status" value="1"/>
</dbReference>
<dbReference type="PROSITE" id="PS50860">
    <property type="entry name" value="AA_TRNA_LIGASE_II_ALA"/>
    <property type="match status" value="1"/>
</dbReference>
<accession>Q5M5L5</accession>
<protein>
    <recommendedName>
        <fullName evidence="1">Alanine--tRNA ligase</fullName>
        <ecNumber evidence="1">6.1.1.7</ecNumber>
    </recommendedName>
    <alternativeName>
        <fullName evidence="1">Alanyl-tRNA synthetase</fullName>
        <shortName evidence="1">AlaRS</shortName>
    </alternativeName>
</protein>
<sequence length="872" mass="96716">MKQLTSAQIRQMWLDFWKSKGHAVEPSANLVPVNDPTLLWINSGVATLKKYFDGSVIPENPRITNSQKAIRTNDIENVGKTARHHTMFEMLGNFSVGDYFRDEAIEWGYELLTSPEWFDLPKDKLYMTYYPDDKDSYNRWIACGVEPSHLIPIEDNFWEIGAGPSGPDTEIFFDRGEEFDPDNIGIRLLEEDIENDRYIEIWNIVLSQFNADPAVPRSEYKELPNKNIDTGAGLERLAAVMQGAKTNFETDLFMPIIREIEKMSGKAYDPDGETLSFKVIADHIRSLAFAIGDGALPGNEGRGYVLRRLLRRAVMHGRRLGISDAFLYKLVPTVGQIMESYYPEVLEKRDFIEKIVKREEETFARTIDAGSSMLDELLANLKKSGKDTLEGKDIFKLYDTYGFPVELTEELAEDEGFKIDHEGFKAAMKEQQDRARASVVKGGSMGMQNETLANITEPSEFLYEAETAESRLSVIVADDARHDSVNSGQALLVFEQTPFYAEMGGQVADHGTISDAAGTTVARVVDVQRAPNGQALHTVEVEGELVVGANYKLEIDHSRRHRVMKNHTATHLLHAALHNIVGNHAVQAGSLNEQEFLRFDFTHFEAVTPEELRAIEEQVNEEIWKATPVTTIETDIDTAKSMGAMALFGEKYGKRVRVVSIGDYSVELCGGTHVANTAEIGMFKIIKEEGIGSGTRRILAVTSREAYLAYREEEDALKSIAATLKAPQLKEVPNKVASLQEQLHALQKENATLKEKAAAAAAGDVFKDVKEANGVRYIASQVEVSDAGALRTFADQWKQADYSDVLVLAAHIREKVNVLVASKSENVHAGNLIKVLAPIVSGRGGGKPDMAMAGGSDANSIQDLLSAVAEQF</sequence>
<comment type="function">
    <text evidence="1">Catalyzes the attachment of alanine to tRNA(Ala) in a two-step reaction: alanine is first activated by ATP to form Ala-AMP and then transferred to the acceptor end of tRNA(Ala). Also edits incorrectly charged Ser-tRNA(Ala) and Gly-tRNA(Ala) via its editing domain.</text>
</comment>
<comment type="catalytic activity">
    <reaction evidence="1">
        <text>tRNA(Ala) + L-alanine + ATP = L-alanyl-tRNA(Ala) + AMP + diphosphate</text>
        <dbReference type="Rhea" id="RHEA:12540"/>
        <dbReference type="Rhea" id="RHEA-COMP:9657"/>
        <dbReference type="Rhea" id="RHEA-COMP:9923"/>
        <dbReference type="ChEBI" id="CHEBI:30616"/>
        <dbReference type="ChEBI" id="CHEBI:33019"/>
        <dbReference type="ChEBI" id="CHEBI:57972"/>
        <dbReference type="ChEBI" id="CHEBI:78442"/>
        <dbReference type="ChEBI" id="CHEBI:78497"/>
        <dbReference type="ChEBI" id="CHEBI:456215"/>
        <dbReference type="EC" id="6.1.1.7"/>
    </reaction>
</comment>
<comment type="cofactor">
    <cofactor evidence="1">
        <name>Zn(2+)</name>
        <dbReference type="ChEBI" id="CHEBI:29105"/>
    </cofactor>
    <text evidence="1">Binds 1 zinc ion per subunit.</text>
</comment>
<comment type="subcellular location">
    <subcellularLocation>
        <location evidence="1">Cytoplasm</location>
    </subcellularLocation>
</comment>
<comment type="domain">
    <text evidence="1">Consists of three domains; the N-terminal catalytic domain, the editing domain and the C-terminal C-Ala domain. The editing domain removes incorrectly charged amino acids, while the C-Ala domain, along with tRNA(Ala), serves as a bridge to cooperatively bring together the editing and aminoacylation centers thus stimulating deacylation of misacylated tRNAs.</text>
</comment>
<comment type="similarity">
    <text evidence="1">Belongs to the class-II aminoacyl-tRNA synthetase family.</text>
</comment>
<evidence type="ECO:0000255" key="1">
    <source>
        <dbReference type="HAMAP-Rule" id="MF_00036"/>
    </source>
</evidence>
<gene>
    <name evidence="1" type="primary">alaS</name>
    <name type="ordered locus">stu0457</name>
</gene>
<reference key="1">
    <citation type="journal article" date="2004" name="Nat. Biotechnol.">
        <title>Complete sequence and comparative genome analysis of the dairy bacterium Streptococcus thermophilus.</title>
        <authorList>
            <person name="Bolotin A."/>
            <person name="Quinquis B."/>
            <person name="Renault P."/>
            <person name="Sorokin A."/>
            <person name="Ehrlich S.D."/>
            <person name="Kulakauskas S."/>
            <person name="Lapidus A."/>
            <person name="Goltsman E."/>
            <person name="Mazur M."/>
            <person name="Pusch G.D."/>
            <person name="Fonstein M."/>
            <person name="Overbeek R."/>
            <person name="Kyprides N."/>
            <person name="Purnelle B."/>
            <person name="Prozzi D."/>
            <person name="Ngui K."/>
            <person name="Masuy D."/>
            <person name="Hancy F."/>
            <person name="Burteau S."/>
            <person name="Boutry M."/>
            <person name="Delcour J."/>
            <person name="Goffeau A."/>
            <person name="Hols P."/>
        </authorList>
    </citation>
    <scope>NUCLEOTIDE SEQUENCE [LARGE SCALE GENOMIC DNA]</scope>
    <source>
        <strain>ATCC BAA-250 / LMG 18311</strain>
    </source>
</reference>